<gene>
    <name type="primary">Grid2</name>
</gene>
<accession>Q63226</accession>
<accession>Q62641</accession>
<name>GRID2_RAT</name>
<proteinExistence type="evidence at protein level"/>
<sequence>MEVFPLLFFLSFWWSRTWDLATSDSIIHIGAIFDESAKKDDEVFRTAVGDLNQNEEILQTEKITFSVTFVDGNNPFQAVQEACELMNQGILALVSSIGCTSAGSLQSLADAMHIPHLFIQRSTAGTPRSGCGLTRSNRNDDYTLSVRPPVYLNEVILRVVTEYAWQKFIIFYDSEYDIRGIQEFLDKVSQQGMDVALQKVENNINKMITTLFDTMRIEELNRYRDTLRRAILVMNPATAKSFISEVVETNLVAFDCHWIIINEEINDVDVQELVRRSIGRLTIIRQTFPVPQNISQRCFRGNHRISSTLCDPKDPFAQNMEISNLYIYDTVLLLANAFHKKLEDRKWHSMASLSCIRKNSKPWQGGRSMLETIKKGGVNGLTGDLEFGENGGNPNVHFEILGTNYGEELGRGVRKLGCWNPVTGLNGSLTDKKLENNMRGVVLRVVTVLEEPFVMVSENVLGKPKKYQGFSIDVLDALSNYLGFNYEIYVAPDHKYGSPQEDGTWNGLVGELVFKRADIGISALTITPDRENVVDFTTRYMDYSVGVLLRRAEKTVDMFACLAPFDLSLWACIAGTVLLVGLLVYLLNWLNPPRLQMGSMTSTTLYNSMWFVYGSFVQQGGEVPYTTLATRMMMGAWWLFALIVISSYTANLAAFLTITRIESSIQSLQDLSKQTDIPYGTVLDSAVYQHVRMKGLNPFERDSMYSQMWRMINRSNGSENNVLESQAGIQKVKYGNYAFVWDAAVLEYVAINDPDCSFYTVGNTVADRGYGIALQHGSPYRDVFSQRILELQQSGDMDILKHKWWPKNGQCDLYSSVDAKQKGGALDIKSLAGVFCILAAGIVLSCLIAVLETWWSRRKGSRVPSKEDDKEIDLEHLHRRVNSLCTDDDSPHKQFSTSSIDLTPLDIDTLPTRQALEQISDFRNTHITTTTFIPEQIQTLSRTLSAKAASGFTFGSVPEHRTGPFRHRAPNGGFFRSPIKTMSSIPYQPTPTLGLNLGNDPDRGTSI</sequence>
<reference key="1">
    <citation type="journal article" date="1993" name="FEBS Lett.">
        <title>The rat delta-1 and delta-2 subunits extend the excitatory amino acid receptor family.</title>
        <authorList>
            <person name="Lomeli H."/>
            <person name="Sprengel R."/>
            <person name="Laurie D."/>
            <person name="Khr G."/>
            <person name="Herb A."/>
            <person name="Seeburg P."/>
            <person name="Wisden W."/>
        </authorList>
    </citation>
    <scope>NUCLEOTIDE SEQUENCE [MRNA]</scope>
    <scope>TISSUE SPECIFICITY</scope>
    <source>
        <tissue>Brain</tissue>
    </source>
</reference>
<reference key="2">
    <citation type="submission" date="1994-03" db="EMBL/GenBank/DDBJ databases">
        <title>Nucleotide sequence of rat glutamate receptor subunit gene delta2.</title>
        <authorList>
            <person name="Boulter J."/>
            <person name="Pecht G."/>
        </authorList>
    </citation>
    <scope>NUCLEOTIDE SEQUENCE [MRNA]</scope>
    <source>
        <strain>Sprague-Dawley</strain>
        <tissue>Brain</tissue>
    </source>
</reference>
<reference key="3">
    <citation type="journal article" date="2002" name="Biochem. Biophys. Res. Commun.">
        <title>Identification of rat EMAP, a delta-glutamate receptor binding protein.</title>
        <authorList>
            <person name="Ly C.D."/>
            <person name="Roche K.W."/>
            <person name="Lee H.K."/>
            <person name="Wenthold R.J."/>
        </authorList>
    </citation>
    <scope>INTERACTION WITH EML2</scope>
</reference>
<reference key="4">
    <citation type="journal article" date="2003" name="Biochem. Biophys. Res. Commun.">
        <title>PKC regulates the delta2 glutamate receptor interaction with S-SCAM/MAGI-2 protein.</title>
        <authorList>
            <person name="Yap C.C."/>
            <person name="Muto Y."/>
            <person name="Kishida H."/>
            <person name="Hashikawa T."/>
            <person name="Yano R."/>
        </authorList>
    </citation>
    <scope>INTERACTION WITH MAGI2</scope>
</reference>
<reference key="5">
    <citation type="journal article" date="2003" name="Mol. Cell. Neurosci.">
        <title>Adaptor protein complex-4 (AP-4) is expressed in the central nervous system neurons and interacts with glutamate receptor delta2.</title>
        <authorList>
            <person name="Yap C.C."/>
            <person name="Murate M."/>
            <person name="Kishigami S."/>
            <person name="Muto Y."/>
            <person name="Kishida H."/>
            <person name="Hashikawa T."/>
            <person name="Yano R."/>
        </authorList>
    </citation>
    <scope>INTERACTION WITH AP4M1</scope>
    <scope>MUTAGENESIS OF SER-945; PHE-952; PHE-954; VAL-957; 965-PHE-ARG-966 AND 975-PHE-ARG-976</scope>
</reference>
<reference key="6">
    <citation type="journal article" date="2012" name="Nat. Commun.">
        <title>Quantitative maps of protein phosphorylation sites across 14 different rat organs and tissues.</title>
        <authorList>
            <person name="Lundby A."/>
            <person name="Secher A."/>
            <person name="Lage K."/>
            <person name="Nordsborg N.B."/>
            <person name="Dmytriyev A."/>
            <person name="Lundby C."/>
            <person name="Olsen J.V."/>
        </authorList>
    </citation>
    <scope>PHOSPHORYLATION [LARGE SCALE ANALYSIS] AT SER-883; SER-890 AND SER-1006</scope>
    <scope>IDENTIFICATION BY MASS SPECTROMETRY [LARGE SCALE ANALYSIS]</scope>
</reference>
<reference key="7">
    <citation type="journal article" date="2007" name="Proc. Natl. Acad. Sci. U.S.A.">
        <title>Ionotropic glutamate-like receptor delta2 binds D-serine and glycine.</title>
        <authorList>
            <person name="Naur P."/>
            <person name="Hansen K.B."/>
            <person name="Kristensen A.S."/>
            <person name="Dravid S.M."/>
            <person name="Pickering D.S."/>
            <person name="Olsen L."/>
            <person name="Vestergaard B."/>
            <person name="Egebjerg J."/>
            <person name="Gajhede M."/>
            <person name="Traynelis S.F."/>
            <person name="Kastrup J.S."/>
        </authorList>
    </citation>
    <scope>X-RAY CRYSTALLOGRAPHY (2.75 ANGSTROMS) OF 440-813 IN COMPLEX WITH SERINE</scope>
</reference>
<evidence type="ECO:0000250" key="1"/>
<evidence type="ECO:0000250" key="2">
    <source>
        <dbReference type="UniProtKB" id="O43424"/>
    </source>
</evidence>
<evidence type="ECO:0000250" key="3">
    <source>
        <dbReference type="UniProtKB" id="Q61625"/>
    </source>
</evidence>
<evidence type="ECO:0000255" key="4"/>
<evidence type="ECO:0000269" key="5">
    <source>
    </source>
</evidence>
<evidence type="ECO:0000269" key="6">
    <source>
    </source>
</evidence>
<evidence type="ECO:0000269" key="7">
    <source>
    </source>
</evidence>
<evidence type="ECO:0000269" key="8">
    <source>
    </source>
</evidence>
<evidence type="ECO:0000305" key="9"/>
<evidence type="ECO:0007744" key="10">
    <source>
    </source>
</evidence>
<evidence type="ECO:0007829" key="11">
    <source>
        <dbReference type="PDB" id="2V3T"/>
    </source>
</evidence>
<evidence type="ECO:0007829" key="12">
    <source>
        <dbReference type="PDB" id="2V3U"/>
    </source>
</evidence>
<evidence type="ECO:0007829" key="13">
    <source>
        <dbReference type="PDB" id="5CC2"/>
    </source>
</evidence>
<protein>
    <recommendedName>
        <fullName>Glutamate receptor ionotropic, delta-2</fullName>
        <shortName>GluD2</shortName>
        <shortName>GluR delta-2 subunit</shortName>
    </recommendedName>
</protein>
<dbReference type="EMBL" id="Z17239">
    <property type="protein sequence ID" value="CAA78937.1"/>
    <property type="molecule type" value="mRNA"/>
</dbReference>
<dbReference type="EMBL" id="U08256">
    <property type="protein sequence ID" value="AAA17829.1"/>
    <property type="molecule type" value="mRNA"/>
</dbReference>
<dbReference type="PIR" id="S28858">
    <property type="entry name" value="S28858"/>
</dbReference>
<dbReference type="RefSeq" id="NP_077355.2">
    <property type="nucleotide sequence ID" value="NM_024379.2"/>
</dbReference>
<dbReference type="PDB" id="2V3T">
    <property type="method" value="X-ray"/>
    <property type="resolution" value="2.75 A"/>
    <property type="chains" value="A/B=440-551, A/B=664-813"/>
</dbReference>
<dbReference type="PDB" id="2V3U">
    <property type="method" value="X-ray"/>
    <property type="resolution" value="1.74 A"/>
    <property type="chains" value="A=440-551, A=664-813"/>
</dbReference>
<dbReference type="PDB" id="5CC2">
    <property type="method" value="X-ray"/>
    <property type="resolution" value="2.50 A"/>
    <property type="chains" value="A=440-551, A=664-813"/>
</dbReference>
<dbReference type="PDB" id="5L2E">
    <property type="method" value="X-ray"/>
    <property type="resolution" value="4.15 A"/>
    <property type="chains" value="A/B/C=24-551, A/B/C=664-813"/>
</dbReference>
<dbReference type="PDB" id="6LU9">
    <property type="method" value="EM"/>
    <property type="resolution" value="8.80 A"/>
    <property type="chains" value="A/B/C/D=24-893"/>
</dbReference>
<dbReference type="PDBsum" id="2V3T"/>
<dbReference type="PDBsum" id="2V3U"/>
<dbReference type="PDBsum" id="5CC2"/>
<dbReference type="PDBsum" id="5L2E"/>
<dbReference type="PDBsum" id="6LU9"/>
<dbReference type="EMDB" id="EMD-0979"/>
<dbReference type="SMR" id="Q63226"/>
<dbReference type="BioGRID" id="249429">
    <property type="interactions" value="1"/>
</dbReference>
<dbReference type="DIP" id="DIP-40709N"/>
<dbReference type="FunCoup" id="Q63226">
    <property type="interactions" value="680"/>
</dbReference>
<dbReference type="IntAct" id="Q63226">
    <property type="interactions" value="4"/>
</dbReference>
<dbReference type="MINT" id="Q63226"/>
<dbReference type="STRING" id="10116.ENSRNOP00000060322"/>
<dbReference type="GlyCosmos" id="Q63226">
    <property type="glycosylation" value="4 sites, 2 glycans"/>
</dbReference>
<dbReference type="GlyGen" id="Q63226">
    <property type="glycosylation" value="5 sites, 2 N-linked glycans (1 site)"/>
</dbReference>
<dbReference type="iPTMnet" id="Q63226"/>
<dbReference type="PhosphoSitePlus" id="Q63226"/>
<dbReference type="PaxDb" id="10116-ENSRNOP00000060322"/>
<dbReference type="Ensembl" id="ENSRNOT00000116787.1">
    <property type="protein sequence ID" value="ENSRNOP00000084985.1"/>
    <property type="gene ID" value="ENSRNOG00000006174.7"/>
</dbReference>
<dbReference type="GeneID" id="79220"/>
<dbReference type="KEGG" id="rno:79220"/>
<dbReference type="UCSC" id="RGD:68368">
    <property type="organism name" value="rat"/>
</dbReference>
<dbReference type="AGR" id="RGD:68368"/>
<dbReference type="CTD" id="2895"/>
<dbReference type="RGD" id="68368">
    <property type="gene designation" value="Grid2"/>
</dbReference>
<dbReference type="eggNOG" id="KOG1052">
    <property type="taxonomic scope" value="Eukaryota"/>
</dbReference>
<dbReference type="GeneTree" id="ENSGT00940000155192"/>
<dbReference type="InParanoid" id="Q63226"/>
<dbReference type="OMA" id="EXISNLY"/>
<dbReference type="OrthoDB" id="5984008at2759"/>
<dbReference type="PhylomeDB" id="Q63226"/>
<dbReference type="TreeFam" id="TF352434"/>
<dbReference type="EvolutionaryTrace" id="Q63226"/>
<dbReference type="PRO" id="PR:Q63226"/>
<dbReference type="Proteomes" id="UP000002494">
    <property type="component" value="Chromosome 4"/>
</dbReference>
<dbReference type="GO" id="GO:0032281">
    <property type="term" value="C:AMPA glutamate receptor complex"/>
    <property type="evidence" value="ECO:0000318"/>
    <property type="project" value="GO_Central"/>
</dbReference>
<dbReference type="GO" id="GO:0043197">
    <property type="term" value="C:dendritic spine"/>
    <property type="evidence" value="ECO:0000266"/>
    <property type="project" value="RGD"/>
</dbReference>
<dbReference type="GO" id="GO:0098978">
    <property type="term" value="C:glutamatergic synapse"/>
    <property type="evidence" value="ECO:0000314"/>
    <property type="project" value="SynGO"/>
</dbReference>
<dbReference type="GO" id="GO:0008328">
    <property type="term" value="C:ionotropic glutamate receptor complex"/>
    <property type="evidence" value="ECO:0000266"/>
    <property type="project" value="RGD"/>
</dbReference>
<dbReference type="GO" id="GO:0016020">
    <property type="term" value="C:membrane"/>
    <property type="evidence" value="ECO:0000266"/>
    <property type="project" value="RGD"/>
</dbReference>
<dbReference type="GO" id="GO:0098688">
    <property type="term" value="C:parallel fiber to Purkinje cell synapse"/>
    <property type="evidence" value="ECO:0000314"/>
    <property type="project" value="SynGO"/>
</dbReference>
<dbReference type="GO" id="GO:0005886">
    <property type="term" value="C:plasma membrane"/>
    <property type="evidence" value="ECO:0000266"/>
    <property type="project" value="RGD"/>
</dbReference>
<dbReference type="GO" id="GO:0098839">
    <property type="term" value="C:postsynaptic density membrane"/>
    <property type="evidence" value="ECO:0000314"/>
    <property type="project" value="SynGO"/>
</dbReference>
<dbReference type="GO" id="GO:0045211">
    <property type="term" value="C:postsynaptic membrane"/>
    <property type="evidence" value="ECO:0000314"/>
    <property type="project" value="RGD"/>
</dbReference>
<dbReference type="GO" id="GO:0036477">
    <property type="term" value="C:somatodendritic compartment"/>
    <property type="evidence" value="ECO:0000266"/>
    <property type="project" value="RGD"/>
</dbReference>
<dbReference type="GO" id="GO:0045202">
    <property type="term" value="C:synapse"/>
    <property type="evidence" value="ECO:0000266"/>
    <property type="project" value="RGD"/>
</dbReference>
<dbReference type="GO" id="GO:0004971">
    <property type="term" value="F:AMPA glutamate receptor activity"/>
    <property type="evidence" value="ECO:0000318"/>
    <property type="project" value="GO_Central"/>
</dbReference>
<dbReference type="GO" id="GO:0042802">
    <property type="term" value="F:identical protein binding"/>
    <property type="evidence" value="ECO:0000353"/>
    <property type="project" value="IntAct"/>
</dbReference>
<dbReference type="GO" id="GO:0030165">
    <property type="term" value="F:PDZ domain binding"/>
    <property type="evidence" value="ECO:0000353"/>
    <property type="project" value="UniProtKB"/>
</dbReference>
<dbReference type="GO" id="GO:0097110">
    <property type="term" value="F:scaffold protein binding"/>
    <property type="evidence" value="ECO:0000266"/>
    <property type="project" value="RGD"/>
</dbReference>
<dbReference type="GO" id="GO:1904315">
    <property type="term" value="F:transmitter-gated monoatomic ion channel activity involved in regulation of postsynaptic membrane potential"/>
    <property type="evidence" value="ECO:0000266"/>
    <property type="project" value="RGD"/>
</dbReference>
<dbReference type="GO" id="GO:0021707">
    <property type="term" value="P:cerebellar granule cell differentiation"/>
    <property type="evidence" value="ECO:0000250"/>
    <property type="project" value="BHF-UCL"/>
</dbReference>
<dbReference type="GO" id="GO:0060079">
    <property type="term" value="P:excitatory postsynaptic potential"/>
    <property type="evidence" value="ECO:0000266"/>
    <property type="project" value="RGD"/>
</dbReference>
<dbReference type="GO" id="GO:1904861">
    <property type="term" value="P:excitatory synapse assembly"/>
    <property type="evidence" value="ECO:0000266"/>
    <property type="project" value="RGD"/>
</dbReference>
<dbReference type="GO" id="GO:0007157">
    <property type="term" value="P:heterophilic cell-cell adhesion via plasma membrane cell adhesion molecules"/>
    <property type="evidence" value="ECO:0000250"/>
    <property type="project" value="BHF-UCL"/>
</dbReference>
<dbReference type="GO" id="GO:0050804">
    <property type="term" value="P:modulation of chemical synaptic transmission"/>
    <property type="evidence" value="ECO:0000318"/>
    <property type="project" value="GO_Central"/>
</dbReference>
<dbReference type="GO" id="GO:1900454">
    <property type="term" value="P:positive regulation of long-term synaptic depression"/>
    <property type="evidence" value="ECO:0000266"/>
    <property type="project" value="RGD"/>
</dbReference>
<dbReference type="GO" id="GO:0051965">
    <property type="term" value="P:positive regulation of synapse assembly"/>
    <property type="evidence" value="ECO:0000266"/>
    <property type="project" value="RGD"/>
</dbReference>
<dbReference type="GO" id="GO:0060134">
    <property type="term" value="P:prepulse inhibition"/>
    <property type="evidence" value="ECO:0000266"/>
    <property type="project" value="RGD"/>
</dbReference>
<dbReference type="GO" id="GO:0008104">
    <property type="term" value="P:protein localization"/>
    <property type="evidence" value="ECO:0000250"/>
    <property type="project" value="BHF-UCL"/>
</dbReference>
<dbReference type="GO" id="GO:0043523">
    <property type="term" value="P:regulation of neuron apoptotic process"/>
    <property type="evidence" value="ECO:0000266"/>
    <property type="project" value="RGD"/>
</dbReference>
<dbReference type="GO" id="GO:0010975">
    <property type="term" value="P:regulation of neuron projection development"/>
    <property type="evidence" value="ECO:0000266"/>
    <property type="project" value="RGD"/>
</dbReference>
<dbReference type="GO" id="GO:0099151">
    <property type="term" value="P:regulation of postsynaptic density assembly"/>
    <property type="evidence" value="ECO:0000266"/>
    <property type="project" value="RGD"/>
</dbReference>
<dbReference type="GO" id="GO:0099072">
    <property type="term" value="P:regulation of postsynaptic membrane neurotransmitter receptor levels"/>
    <property type="evidence" value="ECO:0000266"/>
    <property type="project" value="RGD"/>
</dbReference>
<dbReference type="GO" id="GO:1905606">
    <property type="term" value="P:regulation of presynapse assembly"/>
    <property type="evidence" value="ECO:0000314"/>
    <property type="project" value="SynGO"/>
</dbReference>
<dbReference type="GO" id="GO:0099538">
    <property type="term" value="P:synaptic signaling via neuropeptide"/>
    <property type="evidence" value="ECO:0000266"/>
    <property type="project" value="RGD"/>
</dbReference>
<dbReference type="GO" id="GO:0035249">
    <property type="term" value="P:synaptic transmission, glutamatergic"/>
    <property type="evidence" value="ECO:0000266"/>
    <property type="project" value="RGD"/>
</dbReference>
<dbReference type="CDD" id="cd13731">
    <property type="entry name" value="PBP2_iGluR_delta_2"/>
    <property type="match status" value="1"/>
</dbReference>
<dbReference type="FunFam" id="3.40.190.10:FF:000024">
    <property type="entry name" value="Glutamate receptor, ionotropic, delta 1"/>
    <property type="match status" value="1"/>
</dbReference>
<dbReference type="FunFam" id="3.40.50.2300:FF:000068">
    <property type="entry name" value="Glutamate receptor, ionotropic, delta 1b"/>
    <property type="match status" value="1"/>
</dbReference>
<dbReference type="FunFam" id="1.10.287.70:FF:000045">
    <property type="entry name" value="Glutamate receptor, ionotropic, delta 2"/>
    <property type="match status" value="1"/>
</dbReference>
<dbReference type="FunFam" id="3.40.190.10:FF:000040">
    <property type="entry name" value="Glutamate receptor, ionotropic, delta 2"/>
    <property type="match status" value="1"/>
</dbReference>
<dbReference type="Gene3D" id="1.10.287.70">
    <property type="match status" value="1"/>
</dbReference>
<dbReference type="Gene3D" id="3.40.50.2300">
    <property type="match status" value="2"/>
</dbReference>
<dbReference type="Gene3D" id="3.40.190.10">
    <property type="entry name" value="Periplasmic binding protein-like II"/>
    <property type="match status" value="2"/>
</dbReference>
<dbReference type="InterPro" id="IPR001828">
    <property type="entry name" value="ANF_lig-bd_rcpt"/>
</dbReference>
<dbReference type="InterPro" id="IPR019594">
    <property type="entry name" value="Glu/Gly-bd"/>
</dbReference>
<dbReference type="InterPro" id="IPR001508">
    <property type="entry name" value="Iono_Glu_rcpt_met"/>
</dbReference>
<dbReference type="InterPro" id="IPR015683">
    <property type="entry name" value="Ionotropic_Glu_rcpt"/>
</dbReference>
<dbReference type="InterPro" id="IPR001320">
    <property type="entry name" value="Iontro_rcpt_C"/>
</dbReference>
<dbReference type="InterPro" id="IPR028082">
    <property type="entry name" value="Peripla_BP_I"/>
</dbReference>
<dbReference type="PANTHER" id="PTHR18966">
    <property type="entry name" value="IONOTROPIC GLUTAMATE RECEPTOR"/>
    <property type="match status" value="1"/>
</dbReference>
<dbReference type="Pfam" id="PF01094">
    <property type="entry name" value="ANF_receptor"/>
    <property type="match status" value="1"/>
</dbReference>
<dbReference type="Pfam" id="PF00060">
    <property type="entry name" value="Lig_chan"/>
    <property type="match status" value="1"/>
</dbReference>
<dbReference type="Pfam" id="PF10613">
    <property type="entry name" value="Lig_chan-Glu_bd"/>
    <property type="match status" value="1"/>
</dbReference>
<dbReference type="PRINTS" id="PR00177">
    <property type="entry name" value="NMDARECEPTOR"/>
</dbReference>
<dbReference type="SMART" id="SM00918">
    <property type="entry name" value="Lig_chan-Glu_bd"/>
    <property type="match status" value="1"/>
</dbReference>
<dbReference type="SMART" id="SM00079">
    <property type="entry name" value="PBPe"/>
    <property type="match status" value="1"/>
</dbReference>
<dbReference type="SUPFAM" id="SSF53822">
    <property type="entry name" value="Periplasmic binding protein-like I"/>
    <property type="match status" value="1"/>
</dbReference>
<dbReference type="SUPFAM" id="SSF53850">
    <property type="entry name" value="Periplasmic binding protein-like II"/>
    <property type="match status" value="1"/>
</dbReference>
<feature type="signal peptide" evidence="4">
    <location>
        <begin position="1"/>
        <end position="23"/>
    </location>
</feature>
<feature type="chain" id="PRO_0000011566" description="Glutamate receptor ionotropic, delta-2">
    <location>
        <begin position="24"/>
        <end position="1007"/>
    </location>
</feature>
<feature type="topological domain" description="Extracellular" evidence="4">
    <location>
        <begin position="24"/>
        <end position="566"/>
    </location>
</feature>
<feature type="transmembrane region" description="Helical" evidence="4">
    <location>
        <begin position="567"/>
        <end position="587"/>
    </location>
</feature>
<feature type="topological domain" description="Cytoplasmic" evidence="4">
    <location>
        <begin position="588"/>
        <end position="635"/>
    </location>
</feature>
<feature type="transmembrane region" description="Helical" evidence="4">
    <location>
        <begin position="636"/>
        <end position="656"/>
    </location>
</feature>
<feature type="topological domain" description="Extracellular" evidence="4">
    <location>
        <begin position="657"/>
        <end position="830"/>
    </location>
</feature>
<feature type="transmembrane region" description="Helical" evidence="4">
    <location>
        <begin position="831"/>
        <end position="851"/>
    </location>
</feature>
<feature type="topological domain" description="Cytoplasmic" evidence="4">
    <location>
        <begin position="852"/>
        <end position="1007"/>
    </location>
</feature>
<feature type="region of interest" description="Interaction with CBLN1 homotrimer" evidence="2">
    <location>
        <begin position="24"/>
        <end position="345"/>
    </location>
</feature>
<feature type="region of interest" description="Interaction with AP4M1" evidence="7">
    <location>
        <begin position="921"/>
        <end position="991"/>
    </location>
</feature>
<feature type="short sequence motif" description="PDZ-binding" evidence="1">
    <location>
        <begin position="1005"/>
        <end position="1007"/>
    </location>
</feature>
<feature type="site" description="Essential for dimerization" evidence="2">
    <location>
        <position position="76"/>
    </location>
</feature>
<feature type="modified residue" description="Phosphoserine" evidence="10">
    <location>
        <position position="883"/>
    </location>
</feature>
<feature type="modified residue" description="Phosphothreonine" evidence="3">
    <location>
        <position position="886"/>
    </location>
</feature>
<feature type="modified residue" description="Phosphoserine" evidence="10">
    <location>
        <position position="890"/>
    </location>
</feature>
<feature type="modified residue" description="Phosphoserine" evidence="10">
    <location>
        <position position="1006"/>
    </location>
</feature>
<feature type="glycosylation site" description="N-linked (GlcNAc...) asparagine" evidence="4">
    <location>
        <position position="293"/>
    </location>
</feature>
<feature type="glycosylation site" description="N-linked (GlcNAc...) asparagine" evidence="4">
    <location>
        <position position="426"/>
    </location>
</feature>
<feature type="glycosylation site" description="N-linked (GlcNAc...) asparagine" evidence="4">
    <location>
        <position position="713"/>
    </location>
</feature>
<feature type="glycosylation site" description="N-linked (GlcNAc...) asparagine" evidence="4">
    <location>
        <position position="716"/>
    </location>
</feature>
<feature type="disulfide bond" evidence="2">
    <location>
        <begin position="83"/>
        <end position="355"/>
    </location>
</feature>
<feature type="disulfide bond" evidence="2">
    <location>
        <begin position="99"/>
        <end position="131"/>
    </location>
</feature>
<feature type="disulfide bond" evidence="2">
    <location>
        <begin position="298"/>
        <end position="310"/>
    </location>
</feature>
<feature type="mutagenesis site" description="No effect." evidence="7">
    <original>S</original>
    <variation>A</variation>
    <location>
        <position position="945"/>
    </location>
</feature>
<feature type="mutagenesis site" description="Loss of interaction with AP4M1." evidence="7">
    <original>F</original>
    <variation>A</variation>
    <location>
        <position position="952"/>
    </location>
</feature>
<feature type="mutagenesis site" description="Loss of interaction with AP4M1." evidence="7">
    <original>F</original>
    <variation>A</variation>
    <location>
        <position position="954"/>
    </location>
</feature>
<feature type="mutagenesis site" description="Loss of interaction with AP4M1." evidence="7">
    <original>V</original>
    <variation>E</variation>
    <location>
        <position position="957"/>
    </location>
</feature>
<feature type="mutagenesis site" description="Loss of interaction with AP4M1." evidence="7">
    <original>FR</original>
    <variation>AA</variation>
    <location>
        <begin position="965"/>
        <end position="966"/>
    </location>
</feature>
<feature type="mutagenesis site" description="Loss of interaction with AP4M1." evidence="7">
    <original>FR</original>
    <variation>AA</variation>
    <location>
        <begin position="975"/>
        <end position="976"/>
    </location>
</feature>
<feature type="sequence conflict" description="In Ref. 1; CAA78937." evidence="9" ref="1">
    <original>ADA</original>
    <variation>GRLT</variation>
    <location>
        <begin position="109"/>
        <end position="111"/>
    </location>
</feature>
<feature type="sequence conflict" description="In Ref. 1; CAA78937." evidence="9" ref="1">
    <original>NLY</original>
    <variation>HLC</variation>
    <location>
        <begin position="324"/>
        <end position="326"/>
    </location>
</feature>
<feature type="sequence conflict" description="In Ref. 1; CAA78937." evidence="9" ref="1">
    <original>T</original>
    <variation>A</variation>
    <location>
        <position position="330"/>
    </location>
</feature>
<feature type="sequence conflict" description="In Ref. 2; AAA17829." evidence="9" ref="2">
    <original>E</original>
    <variation>Q</variation>
    <location>
        <position position="343"/>
    </location>
</feature>
<feature type="sequence conflict" description="In Ref. 2; AAA17829." evidence="9" ref="2">
    <original>S</original>
    <variation>F</variation>
    <location>
        <position position="950"/>
    </location>
</feature>
<feature type="strand" evidence="12">
    <location>
        <begin position="442"/>
        <end position="447"/>
    </location>
</feature>
<feature type="turn" evidence="12">
    <location>
        <begin position="451"/>
        <end position="453"/>
    </location>
</feature>
<feature type="strand" evidence="12">
    <location>
        <begin position="454"/>
        <end position="457"/>
    </location>
</feature>
<feature type="strand" evidence="12">
    <location>
        <begin position="466"/>
        <end position="469"/>
    </location>
</feature>
<feature type="helix" evidence="12">
    <location>
        <begin position="470"/>
        <end position="482"/>
    </location>
</feature>
<feature type="strand" evidence="12">
    <location>
        <begin position="485"/>
        <end position="490"/>
    </location>
</feature>
<feature type="turn" evidence="11">
    <location>
        <begin position="501"/>
        <end position="503"/>
    </location>
</feature>
<feature type="helix" evidence="12">
    <location>
        <begin position="507"/>
        <end position="513"/>
    </location>
</feature>
<feature type="strand" evidence="12">
    <location>
        <begin position="518"/>
        <end position="520"/>
    </location>
</feature>
<feature type="helix" evidence="12">
    <location>
        <begin position="528"/>
        <end position="531"/>
    </location>
</feature>
<feature type="strand" evidence="12">
    <location>
        <begin position="534"/>
        <end position="536"/>
    </location>
</feature>
<feature type="strand" evidence="12">
    <location>
        <begin position="540"/>
        <end position="543"/>
    </location>
</feature>
<feature type="strand" evidence="12">
    <location>
        <begin position="545"/>
        <end position="550"/>
    </location>
</feature>
<feature type="helix" evidence="12">
    <location>
        <begin position="668"/>
        <end position="672"/>
    </location>
</feature>
<feature type="strand" evidence="12">
    <location>
        <begin position="675"/>
        <end position="677"/>
    </location>
</feature>
<feature type="helix" evidence="12">
    <location>
        <begin position="686"/>
        <end position="695"/>
    </location>
</feature>
<feature type="helix" evidence="12">
    <location>
        <begin position="704"/>
        <end position="712"/>
    </location>
</feature>
<feature type="helix" evidence="13">
    <location>
        <begin position="714"/>
        <end position="717"/>
    </location>
</feature>
<feature type="strand" evidence="12">
    <location>
        <begin position="722"/>
        <end position="724"/>
    </location>
</feature>
<feature type="helix" evidence="12">
    <location>
        <begin position="725"/>
        <end position="734"/>
    </location>
</feature>
<feature type="strand" evidence="12">
    <location>
        <begin position="738"/>
        <end position="742"/>
    </location>
</feature>
<feature type="helix" evidence="12">
    <location>
        <begin position="743"/>
        <end position="752"/>
    </location>
</feature>
<feature type="strand" evidence="12">
    <location>
        <begin position="758"/>
        <end position="761"/>
    </location>
</feature>
<feature type="strand" evidence="12">
    <location>
        <begin position="768"/>
        <end position="770"/>
    </location>
</feature>
<feature type="strand" evidence="12">
    <location>
        <begin position="773"/>
        <end position="775"/>
    </location>
</feature>
<feature type="helix" evidence="12">
    <location>
        <begin position="781"/>
        <end position="793"/>
    </location>
</feature>
<feature type="helix" evidence="12">
    <location>
        <begin position="796"/>
        <end position="804"/>
    </location>
</feature>
<organism>
    <name type="scientific">Rattus norvegicus</name>
    <name type="common">Rat</name>
    <dbReference type="NCBI Taxonomy" id="10116"/>
    <lineage>
        <taxon>Eukaryota</taxon>
        <taxon>Metazoa</taxon>
        <taxon>Chordata</taxon>
        <taxon>Craniata</taxon>
        <taxon>Vertebrata</taxon>
        <taxon>Euteleostomi</taxon>
        <taxon>Mammalia</taxon>
        <taxon>Eutheria</taxon>
        <taxon>Euarchontoglires</taxon>
        <taxon>Glires</taxon>
        <taxon>Rodentia</taxon>
        <taxon>Myomorpha</taxon>
        <taxon>Muroidea</taxon>
        <taxon>Muridae</taxon>
        <taxon>Murinae</taxon>
        <taxon>Rattus</taxon>
    </lineage>
</organism>
<comment type="function">
    <text evidence="2 3">Member of the ionotropic glutamate receptor family, which plays a crucial role in synaptic organization and signal transduction in the central nervous system. Although it shares structural features with ionotropic glutamate receptors, does not bind glutamate as a primary ligand (By similarity). Promotes synaptogenesis and mediates the D-Serine-dependent long term depression signals and AMPA receptor endocytosis of cerebellar parallel fiber-Purkinje cell (PF-PC) synapses through the NRX1B-CBLN1-GRID2 triad complex (By similarity). In the presence of neurexins and cerebellins, forms cation-selective channels that are proposed to be gated by glycine and D-serine. However, recent research disputes this ligand-gated cation channel activity. Cation-selective ion channel activity can be triggered by GRM1 in Purkinje cells (By similarity).</text>
</comment>
<comment type="catalytic activity">
    <reaction evidence="3">
        <text>Ca(2+)(in) = Ca(2+)(out)</text>
        <dbReference type="Rhea" id="RHEA:29671"/>
        <dbReference type="ChEBI" id="CHEBI:29108"/>
    </reaction>
</comment>
<comment type="catalytic activity">
    <reaction evidence="3">
        <text>Na(+)(in) = Na(+)(out)</text>
        <dbReference type="Rhea" id="RHEA:34963"/>
        <dbReference type="ChEBI" id="CHEBI:29101"/>
    </reaction>
</comment>
<comment type="subunit">
    <text evidence="2 3 5 6 7">Tetramer; dimer of dimers (By similarity). Interacts with AP4M1 (PubMed:14572453). Interacts with EML2 (PubMed:11829466). Interacts with MAGI2 (via PDZ domains) (PubMed:12589829). Interacts with BECN1, GOPC, GRID2IP, SHANK1 and SHANK2. Interacts with CBLN2, but not with CBLN4 (By similarity). Interacts with CBLN1 (via C1q domain); the interaction is CBLN1-NRX1 complex formation-dependent; CBLN1-binding is calcium-independent; CBLN1 hexamers anchor GRID2 N-terminal domain dimers to monomeric NRXN1 isoform beta; promotes synaptogenesis and mediates the D-Serine-dependent long term depression signals and AMPA receptor endocytosis (By similarity).</text>
</comment>
<comment type="interaction">
    <interactant intactId="EBI-6988699">
        <id>Q63226</id>
    </interactant>
    <interactant intactId="EBI-6988699">
        <id>Q63226</id>
        <label>Grid2</label>
    </interactant>
    <organismsDiffer>false</organismsDiffer>
    <experiments>2</experiments>
</comment>
<comment type="subcellular location">
    <subcellularLocation>
        <location evidence="3">Postsynaptic cell membrane</location>
        <topology evidence="4">Multi-pass membrane protein</topology>
    </subcellularLocation>
</comment>
<comment type="tissue specificity">
    <text evidence="8">Expressed at high levels in the cerebellar Purkinje cell layer, almost absent in the forebrain.</text>
</comment>
<comment type="domain">
    <text evidence="1">The PDZ-binding motif mediates interaction with GOPC.</text>
</comment>
<comment type="similarity">
    <text evidence="9">Belongs to the glutamate-gated ion channel (TC 1.A.10.1) family. GRID2 subfamily.</text>
</comment>
<keyword id="KW-0002">3D-structure</keyword>
<keyword id="KW-1003">Cell membrane</keyword>
<keyword id="KW-1015">Disulfide bond</keyword>
<keyword id="KW-0325">Glycoprotein</keyword>
<keyword id="KW-0407">Ion channel</keyword>
<keyword id="KW-0406">Ion transport</keyword>
<keyword id="KW-1071">Ligand-gated ion channel</keyword>
<keyword id="KW-0472">Membrane</keyword>
<keyword id="KW-0597">Phosphoprotein</keyword>
<keyword id="KW-0628">Postsynaptic cell membrane</keyword>
<keyword id="KW-0675">Receptor</keyword>
<keyword id="KW-1185">Reference proteome</keyword>
<keyword id="KW-0732">Signal</keyword>
<keyword id="KW-0770">Synapse</keyword>
<keyword id="KW-0812">Transmembrane</keyword>
<keyword id="KW-1133">Transmembrane helix</keyword>
<keyword id="KW-0813">Transport</keyword>